<name>QGDA_PSEPU</name>
<sequence>MRQTGLASLPLKSLAVAVLLSLAGTPALAADIPANVDGARIIAADKEPGNWMSTGRTYDEQRYSPLKQISDQNVGQLGLAWSYKLDLDRGVEATPIVVDGAMYTTGPFSVVYALDARDGRLIWKYDPQSDRHRAGEACCDAVNRGVAVWKGKVYVGVLDGRLEAIDAKTGQRAWSVDTRADHKRSYTITGAPRVVNGKVVIGNGGAEFGVRGYVTAYDAETGKEAWRFYTVPGDPKLPPEGKGMEIAAKTWFGDAYVEQGGGGTAWDSFAYDPELNLLYIGVGNGSLWDPKWRSQAKGDNLFLSSIVAVNADTGEYVWHYQTTPGDAWDYTATQHMILAELPIDGKPRKVLMQAPKNGFFYVIDRATGELLSAKGIVPQSWTKGMDMKTGRPILDEENAAYWKNGKRNLVTPAFWGAHDWQPMSYNPDTGLVYIPAHIMSAYYEHIPEAPKRNPFKSMYQLGLRTGMMPEGAEGLLEMAKSWSGKLIAWDPVKQQAAWEVPYVTIFNGGTLSTAGNLVFEGSADGRVIAYAADTGEKLWEQPAASGVMAAPVTYSVDGEQYVTFMAGWGGAFSTFAGALSLRAGVQPYAQVLTYKLGGTAKLQEPAPRPDTPKPPALSNDTASIEAGAKLYDGYCSQCHGIHAVSGGVLPDLRKLTPEKHQMFLGILFGGRVPDGMPSFADAFTPEQVDQIHQYLIKRAHDLHQEGDTWKQFSAKSSH</sequence>
<feature type="signal peptide" evidence="3">
    <location>
        <begin position="1"/>
        <end position="29"/>
    </location>
</feature>
<feature type="chain" id="PRO_0000419526" description="Quinohemoprotein alcohol dehydrogenase ADH-IIG" evidence="6">
    <location>
        <begin position="30"/>
        <end position="718"/>
    </location>
</feature>
<feature type="domain" description="Cytochrome c" evidence="2">
    <location>
        <begin position="622"/>
        <end position="699"/>
    </location>
</feature>
<feature type="active site" description="Proton acceptor" evidence="10">
    <location>
        <position position="329"/>
    </location>
</feature>
<feature type="binding site" evidence="1">
    <location>
        <position position="92"/>
    </location>
    <ligand>
        <name>pyrroloquinoline quinone</name>
        <dbReference type="ChEBI" id="CHEBI:58442"/>
    </ligand>
</feature>
<feature type="binding site" evidence="3 11">
    <location>
        <position position="144"/>
    </location>
    <ligand>
        <name>pyrroloquinoline quinone</name>
        <dbReference type="ChEBI" id="CHEBI:58442"/>
    </ligand>
</feature>
<feature type="binding site" evidence="3 11">
    <location>
        <position position="189"/>
    </location>
    <ligand>
        <name>pyrroloquinoline quinone</name>
        <dbReference type="ChEBI" id="CHEBI:58442"/>
    </ligand>
</feature>
<feature type="binding site" evidence="3 11">
    <location>
        <begin position="205"/>
        <end position="206"/>
    </location>
    <ligand>
        <name>pyrroloquinoline quinone</name>
        <dbReference type="ChEBI" id="CHEBI:58442"/>
    </ligand>
</feature>
<feature type="binding site" evidence="3 11">
    <location>
        <position position="207"/>
    </location>
    <ligand>
        <name>Ca(2+)</name>
        <dbReference type="ChEBI" id="CHEBI:29108"/>
    </ligand>
</feature>
<feature type="binding site" evidence="3 11">
    <location>
        <position position="264"/>
    </location>
    <ligand>
        <name>pyrroloquinoline quinone</name>
        <dbReference type="ChEBI" id="CHEBI:58442"/>
    </ligand>
</feature>
<feature type="binding site" evidence="3 11">
    <location>
        <position position="284"/>
    </location>
    <ligand>
        <name>Ca(2+)</name>
        <dbReference type="ChEBI" id="CHEBI:29108"/>
    </ligand>
</feature>
<feature type="binding site" evidence="3 11">
    <location>
        <position position="329"/>
    </location>
    <ligand>
        <name>Ca(2+)</name>
        <dbReference type="ChEBI" id="CHEBI:29108"/>
    </ligand>
</feature>
<feature type="binding site" evidence="3 11">
    <location>
        <position position="356"/>
    </location>
    <ligand>
        <name>pyrroloquinoline quinone</name>
        <dbReference type="ChEBI" id="CHEBI:58442"/>
    </ligand>
</feature>
<feature type="binding site" evidence="3 11">
    <location>
        <position position="415"/>
    </location>
    <ligand>
        <name>substrate</name>
    </ligand>
</feature>
<feature type="binding site" evidence="3 11">
    <location>
        <begin position="419"/>
        <end position="420"/>
    </location>
    <ligand>
        <name>pyrroloquinoline quinone</name>
        <dbReference type="ChEBI" id="CHEBI:58442"/>
    </ligand>
</feature>
<feature type="binding site" evidence="1">
    <location>
        <position position="571"/>
    </location>
    <ligand>
        <name>pyrroloquinoline quinone</name>
        <dbReference type="ChEBI" id="CHEBI:58442"/>
    </ligand>
</feature>
<feature type="binding site" description="covalent" evidence="3 11">
    <location>
        <position position="635"/>
    </location>
    <ligand>
        <name>heme c</name>
        <dbReference type="ChEBI" id="CHEBI:61717"/>
    </ligand>
</feature>
<feature type="binding site" description="covalent" evidence="3 11">
    <location>
        <position position="638"/>
    </location>
    <ligand>
        <name>heme c</name>
        <dbReference type="ChEBI" id="CHEBI:61717"/>
    </ligand>
</feature>
<feature type="binding site" description="axial binding residue" evidence="3 11">
    <location>
        <position position="639"/>
    </location>
    <ligand>
        <name>heme c</name>
        <dbReference type="ChEBI" id="CHEBI:61717"/>
    </ligand>
    <ligandPart>
        <name>Fe</name>
        <dbReference type="ChEBI" id="CHEBI:18248"/>
    </ligandPart>
</feature>
<feature type="binding site" description="axial binding residue" evidence="3 11">
    <location>
        <position position="676"/>
    </location>
    <ligand>
        <name>heme c</name>
        <dbReference type="ChEBI" id="CHEBI:61717"/>
    </ligand>
    <ligandPart>
        <name>Fe</name>
        <dbReference type="ChEBI" id="CHEBI:18248"/>
    </ligandPart>
</feature>
<feature type="disulfide bond" evidence="3">
    <location>
        <begin position="138"/>
        <end position="139"/>
    </location>
</feature>
<feature type="helix" evidence="12">
    <location>
        <begin position="38"/>
        <end position="42"/>
    </location>
</feature>
<feature type="helix" evidence="12">
    <location>
        <begin position="44"/>
        <end position="46"/>
    </location>
</feature>
<feature type="turn" evidence="12">
    <location>
        <begin position="71"/>
        <end position="73"/>
    </location>
</feature>
<feature type="helix" evidence="12">
    <location>
        <begin position="74"/>
        <end position="76"/>
    </location>
</feature>
<feature type="strand" evidence="12">
    <location>
        <begin position="77"/>
        <end position="84"/>
    </location>
</feature>
<feature type="strand" evidence="12">
    <location>
        <begin position="96"/>
        <end position="98"/>
    </location>
</feature>
<feature type="strand" evidence="12">
    <location>
        <begin position="101"/>
        <end position="105"/>
    </location>
</feature>
<feature type="helix" evidence="12">
    <location>
        <begin position="107"/>
        <end position="109"/>
    </location>
</feature>
<feature type="strand" evidence="12">
    <location>
        <begin position="111"/>
        <end position="115"/>
    </location>
</feature>
<feature type="turn" evidence="12">
    <location>
        <begin position="116"/>
        <end position="118"/>
    </location>
</feature>
<feature type="strand" evidence="12">
    <location>
        <begin position="121"/>
        <end position="125"/>
    </location>
</feature>
<feature type="helix" evidence="12">
    <location>
        <begin position="131"/>
        <end position="136"/>
    </location>
</feature>
<feature type="strand" evidence="12">
    <location>
        <begin position="147"/>
        <end position="149"/>
    </location>
</feature>
<feature type="strand" evidence="12">
    <location>
        <begin position="152"/>
        <end position="156"/>
    </location>
</feature>
<feature type="strand" evidence="12">
    <location>
        <begin position="160"/>
        <end position="166"/>
    </location>
</feature>
<feature type="turn" evidence="12">
    <location>
        <begin position="167"/>
        <end position="169"/>
    </location>
</feature>
<feature type="strand" evidence="12">
    <location>
        <begin position="172"/>
        <end position="177"/>
    </location>
</feature>
<feature type="strand" evidence="12">
    <location>
        <begin position="193"/>
        <end position="195"/>
    </location>
</feature>
<feature type="strand" evidence="12">
    <location>
        <begin position="198"/>
        <end position="201"/>
    </location>
</feature>
<feature type="turn" evidence="12">
    <location>
        <begin position="206"/>
        <end position="208"/>
    </location>
</feature>
<feature type="strand" evidence="12">
    <location>
        <begin position="213"/>
        <end position="218"/>
    </location>
</feature>
<feature type="turn" evidence="12">
    <location>
        <begin position="219"/>
        <end position="221"/>
    </location>
</feature>
<feature type="strand" evidence="12">
    <location>
        <begin position="224"/>
        <end position="231"/>
    </location>
</feature>
<feature type="helix" evidence="12">
    <location>
        <begin position="242"/>
        <end position="248"/>
    </location>
</feature>
<feature type="helix" evidence="12">
    <location>
        <begin position="256"/>
        <end position="259"/>
    </location>
</feature>
<feature type="strand" evidence="12">
    <location>
        <begin position="269"/>
        <end position="272"/>
    </location>
</feature>
<feature type="turn" evidence="12">
    <location>
        <begin position="273"/>
        <end position="276"/>
    </location>
</feature>
<feature type="strand" evidence="12">
    <location>
        <begin position="277"/>
        <end position="281"/>
    </location>
</feature>
<feature type="strand" evidence="12">
    <location>
        <begin position="285"/>
        <end position="288"/>
    </location>
</feature>
<feature type="helix" evidence="12">
    <location>
        <begin position="290"/>
        <end position="294"/>
    </location>
</feature>
<feature type="turn" evidence="12">
    <location>
        <begin position="301"/>
        <end position="304"/>
    </location>
</feature>
<feature type="strand" evidence="12">
    <location>
        <begin position="305"/>
        <end position="310"/>
    </location>
</feature>
<feature type="turn" evidence="12">
    <location>
        <begin position="311"/>
        <end position="313"/>
    </location>
</feature>
<feature type="strand" evidence="12">
    <location>
        <begin position="316"/>
        <end position="323"/>
    </location>
</feature>
<feature type="strand" evidence="12">
    <location>
        <begin position="336"/>
        <end position="343"/>
    </location>
</feature>
<feature type="strand" evidence="12">
    <location>
        <begin position="346"/>
        <end position="353"/>
    </location>
</feature>
<feature type="strand" evidence="12">
    <location>
        <begin position="358"/>
        <end position="364"/>
    </location>
</feature>
<feature type="turn" evidence="12">
    <location>
        <begin position="365"/>
        <end position="367"/>
    </location>
</feature>
<feature type="strand" evidence="12">
    <location>
        <begin position="370"/>
        <end position="377"/>
    </location>
</feature>
<feature type="strand" evidence="12">
    <location>
        <begin position="380"/>
        <end position="386"/>
    </location>
</feature>
<feature type="turn" evidence="12">
    <location>
        <begin position="387"/>
        <end position="390"/>
    </location>
</feature>
<feature type="strand" evidence="12">
    <location>
        <begin position="391"/>
        <end position="394"/>
    </location>
</feature>
<feature type="helix" evidence="12">
    <location>
        <begin position="396"/>
        <end position="399"/>
    </location>
</feature>
<feature type="turn" evidence="12">
    <location>
        <begin position="401"/>
        <end position="403"/>
    </location>
</feature>
<feature type="strand" evidence="12">
    <location>
        <begin position="404"/>
        <end position="406"/>
    </location>
</feature>
<feature type="strand" evidence="12">
    <location>
        <begin position="408"/>
        <end position="412"/>
    </location>
</feature>
<feature type="turn" evidence="12">
    <location>
        <begin position="427"/>
        <end position="429"/>
    </location>
</feature>
<feature type="strand" evidence="12">
    <location>
        <begin position="432"/>
        <end position="438"/>
    </location>
</feature>
<feature type="strand" evidence="12">
    <location>
        <begin position="441"/>
        <end position="444"/>
    </location>
</feature>
<feature type="strand" evidence="12">
    <location>
        <begin position="462"/>
        <end position="465"/>
    </location>
</feature>
<feature type="helix" evidence="12">
    <location>
        <begin position="472"/>
        <end position="479"/>
    </location>
</feature>
<feature type="strand" evidence="12">
    <location>
        <begin position="483"/>
        <end position="490"/>
    </location>
</feature>
<feature type="turn" evidence="12">
    <location>
        <begin position="491"/>
        <end position="494"/>
    </location>
</feature>
<feature type="strand" evidence="12">
    <location>
        <begin position="495"/>
        <end position="505"/>
    </location>
</feature>
<feature type="strand" evidence="12">
    <location>
        <begin position="510"/>
        <end position="513"/>
    </location>
</feature>
<feature type="turn" evidence="12">
    <location>
        <begin position="514"/>
        <end position="516"/>
    </location>
</feature>
<feature type="strand" evidence="12">
    <location>
        <begin position="517"/>
        <end position="521"/>
    </location>
</feature>
<feature type="strand" evidence="12">
    <location>
        <begin position="525"/>
        <end position="531"/>
    </location>
</feature>
<feature type="turn" evidence="12">
    <location>
        <begin position="532"/>
        <end position="534"/>
    </location>
</feature>
<feature type="strand" evidence="12">
    <location>
        <begin position="537"/>
        <end position="542"/>
    </location>
</feature>
<feature type="strand" evidence="12">
    <location>
        <begin position="552"/>
        <end position="556"/>
    </location>
</feature>
<feature type="strand" evidence="12">
    <location>
        <begin position="559"/>
        <end position="566"/>
    </location>
</feature>
<feature type="helix" evidence="12">
    <location>
        <begin position="572"/>
        <end position="575"/>
    </location>
</feature>
<feature type="helix" evidence="12">
    <location>
        <begin position="577"/>
        <end position="580"/>
    </location>
</feature>
<feature type="helix" evidence="12">
    <location>
        <begin position="581"/>
        <end position="583"/>
    </location>
</feature>
<feature type="strand" evidence="12">
    <location>
        <begin position="590"/>
        <end position="596"/>
    </location>
</feature>
<feature type="helix" evidence="12">
    <location>
        <begin position="621"/>
        <end position="634"/>
    </location>
</feature>
<feature type="helix" evidence="12">
    <location>
        <begin position="636"/>
        <end position="639"/>
    </location>
</feature>
<feature type="helix" evidence="12">
    <location>
        <begin position="641"/>
        <end position="643"/>
    </location>
</feature>
<feature type="strand" evidence="12">
    <location>
        <begin position="647"/>
        <end position="649"/>
    </location>
</feature>
<feature type="helix" evidence="12">
    <location>
        <begin position="657"/>
        <end position="661"/>
    </location>
</feature>
<feature type="helix" evidence="12">
    <location>
        <begin position="663"/>
        <end position="667"/>
    </location>
</feature>
<feature type="turn" evidence="12">
    <location>
        <begin position="668"/>
        <end position="671"/>
    </location>
</feature>
<feature type="helix" evidence="12">
    <location>
        <begin position="672"/>
        <end position="674"/>
    </location>
</feature>
<feature type="turn" evidence="12">
    <location>
        <begin position="680"/>
        <end position="682"/>
    </location>
</feature>
<feature type="helix" evidence="12">
    <location>
        <begin position="685"/>
        <end position="704"/>
    </location>
</feature>
<feature type="helix" evidence="12">
    <location>
        <begin position="710"/>
        <end position="712"/>
    </location>
</feature>
<proteinExistence type="evidence at protein level"/>
<protein>
    <recommendedName>
        <fullName evidence="7">Quinohemoprotein alcohol dehydrogenase ADH-IIG</fullName>
        <shortName evidence="8">ADH IIG</shortName>
        <ecNumber evidence="3 6">1.1.9.1</ecNumber>
    </recommendedName>
    <alternativeName>
        <fullName evidence="9">Alcohol dehydrogenase (azurin)</fullName>
    </alternativeName>
</protein>
<organism>
    <name type="scientific">Pseudomonas putida</name>
    <name type="common">Arthrobacter siderocapsulatus</name>
    <dbReference type="NCBI Taxonomy" id="303"/>
    <lineage>
        <taxon>Bacteria</taxon>
        <taxon>Pseudomonadati</taxon>
        <taxon>Pseudomonadota</taxon>
        <taxon>Gammaproteobacteria</taxon>
        <taxon>Pseudomonadales</taxon>
        <taxon>Pseudomonadaceae</taxon>
        <taxon>Pseudomonas</taxon>
    </lineage>
</organism>
<evidence type="ECO:0000250" key="1">
    <source>
        <dbReference type="UniProtKB" id="Q46444"/>
    </source>
</evidence>
<evidence type="ECO:0000255" key="2">
    <source>
        <dbReference type="PROSITE-ProRule" id="PRU00433"/>
    </source>
</evidence>
<evidence type="ECO:0000269" key="3">
    <source>
    </source>
</evidence>
<evidence type="ECO:0000269" key="4">
    <source>
    </source>
</evidence>
<evidence type="ECO:0000269" key="5">
    <source>
    </source>
</evidence>
<evidence type="ECO:0000269" key="6">
    <source>
    </source>
</evidence>
<evidence type="ECO:0000303" key="7">
    <source>
    </source>
</evidence>
<evidence type="ECO:0000303" key="8">
    <source>
    </source>
</evidence>
<evidence type="ECO:0000305" key="9"/>
<evidence type="ECO:0000305" key="10">
    <source>
    </source>
</evidence>
<evidence type="ECO:0007744" key="11">
    <source>
        <dbReference type="PDB" id="1YIQ"/>
    </source>
</evidence>
<evidence type="ECO:0007829" key="12">
    <source>
        <dbReference type="PDB" id="1YIQ"/>
    </source>
</evidence>
<reference key="1">
    <citation type="journal article" date="2005" name="J. Mol. Biol.">
        <title>Molecular cloning and structural analysis of quinohemoprotein alcohol dehydrogenase ADH-IIG from Pseudomonas putida HK5.</title>
        <authorList>
            <person name="Toyama H."/>
            <person name="Chen Z.W."/>
            <person name="Fukumoto M."/>
            <person name="Adachi O."/>
            <person name="Matsushita K."/>
            <person name="Mathews F.S."/>
        </authorList>
    </citation>
    <scope>NUCLEOTIDE SEQUENCE [GENOMIC DNA]</scope>
    <scope>PROTEIN SEQUENCE OF 30-40 AND 102-111</scope>
    <scope>X-RAY CRYSTALLOGRAPHY (2.20 ANGSTROMS) OF 30-718 IN COMPLEX WITH SUBSTRATE; CALCIUM ION; HEME C AND PYRROLOQUINOLINE QUINONE</scope>
    <scope>FUNCTION</scope>
    <scope>CATALYTIC ACTIVITY</scope>
    <scope>STEREOSELECTIVITY</scope>
    <scope>SUBSTRATE SPECIFICITY</scope>
    <scope>COFACTOR</scope>
    <scope>ACTIVE SITE</scope>
    <scope>SUBCELLULAR LOCATION</scope>
    <scope>BIOPHYSICOCHEMICAL PROPERTIES</scope>
    <scope>SUBUNIT</scope>
    <scope>DISULFIDE BOND</scope>
    <source>
        <strain>HK5</strain>
    </source>
</reference>
<reference key="2">
    <citation type="journal article" date="1995" name="J. Bacteriol.">
        <title>Three distinct quinoprotein alcohol dehydrogenases are expressed when Pseudomonas putida is grown on different alcohols.</title>
        <authorList>
            <person name="Toyama H."/>
            <person name="Fujii A."/>
            <person name="Matsushita K."/>
            <person name="Shinagawa E."/>
            <person name="Ameyama M."/>
            <person name="Adachi O."/>
        </authorList>
    </citation>
    <scope>FUNCTION</scope>
    <scope>CATALYTIC ACTIVITY</scope>
    <scope>COFACTOR</scope>
    <scope>ACTIVITY REGULATION</scope>
    <scope>SUBSTRATE SPECIFICITY</scope>
    <scope>BIOPHYSICOCHEMICAL PROPERTIES</scope>
    <scope>SUBUNIT</scope>
    <scope>INDUCTION</scope>
    <source>
        <strain>HK5</strain>
    </source>
</reference>
<reference key="3">
    <citation type="journal article" date="2008" name="FEMS Microbiol. Lett.">
        <title>Disruption of quinoprotein ethanol dehydrogenase gene and adjacent genes in Pseudomonas putida HK5.</title>
        <authorList>
            <person name="Promden W."/>
            <person name="Vangnai A.S."/>
            <person name="Pongsawasdi P."/>
            <person name="Adachi O."/>
            <person name="Matsushita K."/>
            <person name="Toyama H."/>
        </authorList>
    </citation>
    <scope>FUNCTION</scope>
    <scope>INDUCTION</scope>
    <source>
        <strain>HK5</strain>
    </source>
</reference>
<reference key="4">
    <citation type="journal article" date="2009" name="Microbiology">
        <title>Analysis of the promoter activities of the genes encoding three quinoprotein alcohol dehydrogenases in Pseudomonas putida HK5.</title>
        <authorList>
            <person name="Promden W."/>
            <person name="Vangnai A.S."/>
            <person name="Toyama H."/>
            <person name="Matsushita K."/>
            <person name="Pongsawasdi P."/>
        </authorList>
    </citation>
    <scope>FUNCTION</scope>
    <scope>INDUCTION</scope>
    <scope>STEREOSPECIFICITY</scope>
    <source>
        <strain>HK5</strain>
    </source>
</reference>
<keyword id="KW-0002">3D-structure</keyword>
<keyword id="KW-0106">Calcium</keyword>
<keyword id="KW-0903">Direct protein sequencing</keyword>
<keyword id="KW-1015">Disulfide bond</keyword>
<keyword id="KW-0349">Heme</keyword>
<keyword id="KW-0408">Iron</keyword>
<keyword id="KW-0479">Metal-binding</keyword>
<keyword id="KW-0560">Oxidoreductase</keyword>
<keyword id="KW-0574">Periplasm</keyword>
<keyword id="KW-0634">PQQ</keyword>
<keyword id="KW-0732">Signal</keyword>
<accession>Q4W6G0</accession>
<comment type="function">
    <text evidence="3 4 5 6">Catalyzes the dye-linked oxidation of primary alcohols to the corresponding aldehydes and the (subsequent) oxidation of the aldehydes to carboxylic acids. Active with primary alcohols, glycerol, 1,2-propanediol, 1,3-propanediol but not with methanol or sugar alcohols such as D-sorbitol.</text>
</comment>
<comment type="catalytic activity">
    <reaction evidence="3 6">
        <text>2 oxidized [azurin] + a primary alcohol = 2 reduced [azurin] + an aldehyde + 2 H(+)</text>
        <dbReference type="Rhea" id="RHEA:51148"/>
        <dbReference type="Rhea" id="RHEA-COMP:11034"/>
        <dbReference type="Rhea" id="RHEA-COMP:11035"/>
        <dbReference type="ChEBI" id="CHEBI:15378"/>
        <dbReference type="ChEBI" id="CHEBI:15734"/>
        <dbReference type="ChEBI" id="CHEBI:17478"/>
        <dbReference type="ChEBI" id="CHEBI:29036"/>
        <dbReference type="ChEBI" id="CHEBI:49552"/>
        <dbReference type="EC" id="1.1.9.1"/>
    </reaction>
</comment>
<comment type="cofactor">
    <cofactor evidence="3 6">
        <name>pyrroloquinoline quinone</name>
        <dbReference type="ChEBI" id="CHEBI:58442"/>
    </cofactor>
    <text evidence="3 6">Binds 1 PQQ group per subunit. PQQ is inserted between disulfide Cys-138-Cys-139 and the plane of Trp-266.</text>
</comment>
<comment type="cofactor">
    <cofactor evidence="3">
        <name>Ca(2+)</name>
        <dbReference type="ChEBI" id="CHEBI:29108"/>
    </cofactor>
    <text evidence="3">Binds 1 Ca(2+) ion per subunit.</text>
</comment>
<comment type="cofactor">
    <cofactor evidence="3 6">
        <name>heme c</name>
        <dbReference type="ChEBI" id="CHEBI:61717"/>
    </cofactor>
    <text evidence="3 6">Binds 1 heme c group per subunit.</text>
</comment>
<comment type="activity regulation">
    <text evidence="6">Exhibits higher affinity for 1-butanol compared to 1,2-propanediol but inhibited by 10 mM 1-butanol.</text>
</comment>
<comment type="biophysicochemical properties">
    <kinetics>
        <KM evidence="3 6">33.2 mM for ethanol</KM>
        <KM evidence="3 6">0.226 mM for propane-1,2-diol</KM>
        <KM evidence="3 6">2.4 mM for glycerol</KM>
        <KM evidence="3 6">0.055 mM for (S+)propane-1,2-diol</KM>
        <KM evidence="3 6">3.32 mM for (R-)propane-1,2-diol</KM>
        <KM evidence="3 6">0.043 mM for butane-1-ol</KM>
        <Vmax evidence="3 6">11.5 umol/min/mg enzyme with ethanol as substrate</Vmax>
        <Vmax evidence="3 6">17.4 umol/min/mg enzyme with propane-1,2-diol as substrate</Vmax>
        <Vmax evidence="3 6">17.4 umol/min/mg enzyme with glycerol as substrate</Vmax>
        <Vmax evidence="3 6">21.0 umol/min/mg enzyme with (S+)propane-1,2-diol as substrate</Vmax>
        <Vmax evidence="3 6">12.2 umol/min/mg enzyme with (R-)propane-1,2-diol as substrate</Vmax>
        <Vmax evidence="3 6">8.5 umol/min/mg enzyme with butane-1-ol as substrate</Vmax>
    </kinetics>
    <phDependence>
        <text evidence="3 6">Optimum pH is 8.0.</text>
    </phDependence>
</comment>
<comment type="subunit">
    <text evidence="3 6">Monomer.</text>
</comment>
<comment type="subcellular location">
    <subcellularLocation>
        <location evidence="10">Periplasm</location>
    </subcellularLocation>
</comment>
<comment type="induction">
    <text evidence="4 5 6">(S+)-propane-1,2-diol is the most effective whereas (R-)-propane-1,2-diol, ethanediol and glycerol are weaker inducers.</text>
</comment>
<comment type="similarity">
    <text evidence="9">Belongs to the bacterial PQQ dehydrogenase family.</text>
</comment>
<dbReference type="EC" id="1.1.9.1" evidence="3 6"/>
<dbReference type="EMBL" id="AB204833">
    <property type="protein sequence ID" value="BAD99293.1"/>
    <property type="molecule type" value="Genomic_DNA"/>
</dbReference>
<dbReference type="PDB" id="1YIQ">
    <property type="method" value="X-ray"/>
    <property type="resolution" value="2.20 A"/>
    <property type="chains" value="A=30-718"/>
</dbReference>
<dbReference type="PDBsum" id="1YIQ"/>
<dbReference type="SMR" id="Q4W6G0"/>
<dbReference type="BRENDA" id="1.2.5.2">
    <property type="organism ID" value="5092"/>
</dbReference>
<dbReference type="EvolutionaryTrace" id="Q4W6G0"/>
<dbReference type="GO" id="GO:0016020">
    <property type="term" value="C:membrane"/>
    <property type="evidence" value="ECO:0007669"/>
    <property type="project" value="InterPro"/>
</dbReference>
<dbReference type="GO" id="GO:0042597">
    <property type="term" value="C:periplasmic space"/>
    <property type="evidence" value="ECO:0007669"/>
    <property type="project" value="UniProtKB-SubCell"/>
</dbReference>
<dbReference type="GO" id="GO:0005509">
    <property type="term" value="F:calcium ion binding"/>
    <property type="evidence" value="ECO:0000314"/>
    <property type="project" value="UniProtKB"/>
</dbReference>
<dbReference type="GO" id="GO:0009055">
    <property type="term" value="F:electron transfer activity"/>
    <property type="evidence" value="ECO:0007669"/>
    <property type="project" value="InterPro"/>
</dbReference>
<dbReference type="GO" id="GO:0020037">
    <property type="term" value="F:heme binding"/>
    <property type="evidence" value="ECO:0000314"/>
    <property type="project" value="UniProtKB"/>
</dbReference>
<dbReference type="GO" id="GO:0050039">
    <property type="term" value="F:lactaldehyde reductase (NADPH) activity"/>
    <property type="evidence" value="ECO:0000314"/>
    <property type="project" value="UniProtKB"/>
</dbReference>
<dbReference type="GO" id="GO:0070968">
    <property type="term" value="F:pyrroloquinoline quinone binding"/>
    <property type="evidence" value="ECO:0000314"/>
    <property type="project" value="UniProtKB"/>
</dbReference>
<dbReference type="GO" id="GO:0022900">
    <property type="term" value="P:electron transport chain"/>
    <property type="evidence" value="ECO:0000314"/>
    <property type="project" value="UniProtKB"/>
</dbReference>
<dbReference type="CDD" id="cd10279">
    <property type="entry name" value="PQQ_ADH_II"/>
    <property type="match status" value="1"/>
</dbReference>
<dbReference type="FunFam" id="2.140.10.10:FF:000003">
    <property type="entry name" value="Methanol dehydrogenase, large subunit"/>
    <property type="match status" value="1"/>
</dbReference>
<dbReference type="FunFam" id="1.10.760.10:FF:000063">
    <property type="entry name" value="PQQ-dependent dehydrogenase, methanol/ethanol family"/>
    <property type="match status" value="1"/>
</dbReference>
<dbReference type="Gene3D" id="1.10.760.10">
    <property type="entry name" value="Cytochrome c-like domain"/>
    <property type="match status" value="1"/>
</dbReference>
<dbReference type="Gene3D" id="2.140.10.10">
    <property type="entry name" value="Quinoprotein alcohol dehydrogenase-like superfamily"/>
    <property type="match status" value="1"/>
</dbReference>
<dbReference type="InterPro" id="IPR009056">
    <property type="entry name" value="Cyt_c-like_dom"/>
</dbReference>
<dbReference type="InterPro" id="IPR036909">
    <property type="entry name" value="Cyt_c-like_dom_sf"/>
</dbReference>
<dbReference type="InterPro" id="IPR018391">
    <property type="entry name" value="PQQ_b-propeller_rpt"/>
</dbReference>
<dbReference type="InterPro" id="IPR017512">
    <property type="entry name" value="PQQ_MeOH/EtOH_DH"/>
</dbReference>
<dbReference type="InterPro" id="IPR002372">
    <property type="entry name" value="PQQ_rpt_dom"/>
</dbReference>
<dbReference type="InterPro" id="IPR011047">
    <property type="entry name" value="Quinoprotein_ADH-like_sf"/>
</dbReference>
<dbReference type="NCBIfam" id="TIGR03075">
    <property type="entry name" value="PQQ_enz_alc_DH"/>
    <property type="match status" value="1"/>
</dbReference>
<dbReference type="PANTHER" id="PTHR32303">
    <property type="entry name" value="QUINOPROTEIN ALCOHOL DEHYDROGENASE (CYTOCHROME C)"/>
    <property type="match status" value="1"/>
</dbReference>
<dbReference type="Pfam" id="PF13442">
    <property type="entry name" value="Cytochrome_CBB3"/>
    <property type="match status" value="1"/>
</dbReference>
<dbReference type="Pfam" id="PF01011">
    <property type="entry name" value="PQQ"/>
    <property type="match status" value="2"/>
</dbReference>
<dbReference type="SMART" id="SM00564">
    <property type="entry name" value="PQQ"/>
    <property type="match status" value="5"/>
</dbReference>
<dbReference type="SUPFAM" id="SSF46626">
    <property type="entry name" value="Cytochrome c"/>
    <property type="match status" value="1"/>
</dbReference>
<dbReference type="SUPFAM" id="SSF50998">
    <property type="entry name" value="Quinoprotein alcohol dehydrogenase-like"/>
    <property type="match status" value="1"/>
</dbReference>
<dbReference type="PROSITE" id="PS51007">
    <property type="entry name" value="CYTC"/>
    <property type="match status" value="1"/>
</dbReference>
<gene>
    <name evidence="7" type="primary">qgdA</name>
</gene>